<comment type="function">
    <text evidence="1">Catalyzes the synthesis of GMP from XMP.</text>
</comment>
<comment type="catalytic activity">
    <reaction evidence="1">
        <text>XMP + L-glutamine + ATP + H2O = GMP + L-glutamate + AMP + diphosphate + 2 H(+)</text>
        <dbReference type="Rhea" id="RHEA:11680"/>
        <dbReference type="ChEBI" id="CHEBI:15377"/>
        <dbReference type="ChEBI" id="CHEBI:15378"/>
        <dbReference type="ChEBI" id="CHEBI:29985"/>
        <dbReference type="ChEBI" id="CHEBI:30616"/>
        <dbReference type="ChEBI" id="CHEBI:33019"/>
        <dbReference type="ChEBI" id="CHEBI:57464"/>
        <dbReference type="ChEBI" id="CHEBI:58115"/>
        <dbReference type="ChEBI" id="CHEBI:58359"/>
        <dbReference type="ChEBI" id="CHEBI:456215"/>
        <dbReference type="EC" id="6.3.5.2"/>
    </reaction>
</comment>
<comment type="pathway">
    <text evidence="1">Purine metabolism; GMP biosynthesis; GMP from XMP (L-Gln route): step 1/1.</text>
</comment>
<comment type="subunit">
    <text evidence="1">Homodimer.</text>
</comment>
<accession>A5N5D9</accession>
<feature type="chain" id="PRO_1000120263" description="GMP synthase [glutamine-hydrolyzing]">
    <location>
        <begin position="1"/>
        <end position="510"/>
    </location>
</feature>
<feature type="domain" description="Glutamine amidotransferase type-1" evidence="1">
    <location>
        <begin position="5"/>
        <end position="195"/>
    </location>
</feature>
<feature type="domain" description="GMPS ATP-PPase" evidence="1">
    <location>
        <begin position="196"/>
        <end position="385"/>
    </location>
</feature>
<feature type="active site" description="Nucleophile" evidence="1">
    <location>
        <position position="82"/>
    </location>
</feature>
<feature type="active site" evidence="1">
    <location>
        <position position="169"/>
    </location>
</feature>
<feature type="active site" evidence="1">
    <location>
        <position position="171"/>
    </location>
</feature>
<feature type="binding site" evidence="1">
    <location>
        <begin position="223"/>
        <end position="229"/>
    </location>
    <ligand>
        <name>ATP</name>
        <dbReference type="ChEBI" id="CHEBI:30616"/>
    </ligand>
</feature>
<evidence type="ECO:0000255" key="1">
    <source>
        <dbReference type="HAMAP-Rule" id="MF_00344"/>
    </source>
</evidence>
<dbReference type="EC" id="6.3.5.2" evidence="1"/>
<dbReference type="EMBL" id="CP000673">
    <property type="protein sequence ID" value="EDK32520.1"/>
    <property type="molecule type" value="Genomic_DNA"/>
</dbReference>
<dbReference type="RefSeq" id="WP_011989035.1">
    <property type="nucleotide sequence ID" value="NC_009706.1"/>
</dbReference>
<dbReference type="SMR" id="A5N5D9"/>
<dbReference type="STRING" id="431943.CKL_0466"/>
<dbReference type="MEROPS" id="C26.A21"/>
<dbReference type="KEGG" id="ckl:CKL_0466"/>
<dbReference type="eggNOG" id="COG0519">
    <property type="taxonomic scope" value="Bacteria"/>
</dbReference>
<dbReference type="HOGENOM" id="CLU_014340_0_5_9"/>
<dbReference type="UniPathway" id="UPA00189">
    <property type="reaction ID" value="UER00296"/>
</dbReference>
<dbReference type="Proteomes" id="UP000002411">
    <property type="component" value="Chromosome"/>
</dbReference>
<dbReference type="GO" id="GO:0005829">
    <property type="term" value="C:cytosol"/>
    <property type="evidence" value="ECO:0007669"/>
    <property type="project" value="TreeGrafter"/>
</dbReference>
<dbReference type="GO" id="GO:0005524">
    <property type="term" value="F:ATP binding"/>
    <property type="evidence" value="ECO:0007669"/>
    <property type="project" value="UniProtKB-UniRule"/>
</dbReference>
<dbReference type="GO" id="GO:0003921">
    <property type="term" value="F:GMP synthase activity"/>
    <property type="evidence" value="ECO:0007669"/>
    <property type="project" value="InterPro"/>
</dbReference>
<dbReference type="CDD" id="cd01742">
    <property type="entry name" value="GATase1_GMP_Synthase"/>
    <property type="match status" value="1"/>
</dbReference>
<dbReference type="CDD" id="cd01997">
    <property type="entry name" value="GMP_synthase_C"/>
    <property type="match status" value="1"/>
</dbReference>
<dbReference type="FunFam" id="3.30.300.10:FF:000002">
    <property type="entry name" value="GMP synthase [glutamine-hydrolyzing]"/>
    <property type="match status" value="1"/>
</dbReference>
<dbReference type="FunFam" id="3.40.50.620:FF:000001">
    <property type="entry name" value="GMP synthase [glutamine-hydrolyzing]"/>
    <property type="match status" value="1"/>
</dbReference>
<dbReference type="FunFam" id="3.40.50.880:FF:000001">
    <property type="entry name" value="GMP synthase [glutamine-hydrolyzing]"/>
    <property type="match status" value="1"/>
</dbReference>
<dbReference type="Gene3D" id="3.30.300.10">
    <property type="match status" value="1"/>
</dbReference>
<dbReference type="Gene3D" id="3.40.50.880">
    <property type="match status" value="1"/>
</dbReference>
<dbReference type="Gene3D" id="3.40.50.620">
    <property type="entry name" value="HUPs"/>
    <property type="match status" value="1"/>
</dbReference>
<dbReference type="HAMAP" id="MF_00344">
    <property type="entry name" value="GMP_synthase"/>
    <property type="match status" value="1"/>
</dbReference>
<dbReference type="InterPro" id="IPR029062">
    <property type="entry name" value="Class_I_gatase-like"/>
</dbReference>
<dbReference type="InterPro" id="IPR017926">
    <property type="entry name" value="GATASE"/>
</dbReference>
<dbReference type="InterPro" id="IPR001674">
    <property type="entry name" value="GMP_synth_C"/>
</dbReference>
<dbReference type="InterPro" id="IPR004739">
    <property type="entry name" value="GMP_synth_GATase"/>
</dbReference>
<dbReference type="InterPro" id="IPR022955">
    <property type="entry name" value="GMP_synthase"/>
</dbReference>
<dbReference type="InterPro" id="IPR025777">
    <property type="entry name" value="GMPS_ATP_PPase_dom"/>
</dbReference>
<dbReference type="InterPro" id="IPR014729">
    <property type="entry name" value="Rossmann-like_a/b/a_fold"/>
</dbReference>
<dbReference type="NCBIfam" id="TIGR00884">
    <property type="entry name" value="guaA_Cterm"/>
    <property type="match status" value="1"/>
</dbReference>
<dbReference type="NCBIfam" id="TIGR00888">
    <property type="entry name" value="guaA_Nterm"/>
    <property type="match status" value="1"/>
</dbReference>
<dbReference type="NCBIfam" id="NF000848">
    <property type="entry name" value="PRK00074.1"/>
    <property type="match status" value="1"/>
</dbReference>
<dbReference type="PANTHER" id="PTHR11922:SF2">
    <property type="entry name" value="GMP SYNTHASE [GLUTAMINE-HYDROLYZING]"/>
    <property type="match status" value="1"/>
</dbReference>
<dbReference type="PANTHER" id="PTHR11922">
    <property type="entry name" value="GMP SYNTHASE-RELATED"/>
    <property type="match status" value="1"/>
</dbReference>
<dbReference type="Pfam" id="PF00117">
    <property type="entry name" value="GATase"/>
    <property type="match status" value="1"/>
</dbReference>
<dbReference type="Pfam" id="PF00958">
    <property type="entry name" value="GMP_synt_C"/>
    <property type="match status" value="1"/>
</dbReference>
<dbReference type="Pfam" id="PF03054">
    <property type="entry name" value="tRNA_Me_trans"/>
    <property type="match status" value="1"/>
</dbReference>
<dbReference type="PRINTS" id="PR00097">
    <property type="entry name" value="ANTSNTHASEII"/>
</dbReference>
<dbReference type="PRINTS" id="PR00099">
    <property type="entry name" value="CPSGATASE"/>
</dbReference>
<dbReference type="PRINTS" id="PR00096">
    <property type="entry name" value="GATASE"/>
</dbReference>
<dbReference type="SUPFAM" id="SSF52402">
    <property type="entry name" value="Adenine nucleotide alpha hydrolases-like"/>
    <property type="match status" value="1"/>
</dbReference>
<dbReference type="SUPFAM" id="SSF52317">
    <property type="entry name" value="Class I glutamine amidotransferase-like"/>
    <property type="match status" value="1"/>
</dbReference>
<dbReference type="PROSITE" id="PS51273">
    <property type="entry name" value="GATASE_TYPE_1"/>
    <property type="match status" value="1"/>
</dbReference>
<dbReference type="PROSITE" id="PS51553">
    <property type="entry name" value="GMPS_ATP_PPASE"/>
    <property type="match status" value="1"/>
</dbReference>
<reference key="1">
    <citation type="journal article" date="2008" name="Proc. Natl. Acad. Sci. U.S.A.">
        <title>The genome of Clostridium kluyveri, a strict anaerobe with unique metabolic features.</title>
        <authorList>
            <person name="Seedorf H."/>
            <person name="Fricke W.F."/>
            <person name="Veith B."/>
            <person name="Brueggemann H."/>
            <person name="Liesegang H."/>
            <person name="Strittmatter A."/>
            <person name="Miethke M."/>
            <person name="Buckel W."/>
            <person name="Hinderberger J."/>
            <person name="Li F."/>
            <person name="Hagemeier C."/>
            <person name="Thauer R.K."/>
            <person name="Gottschalk G."/>
        </authorList>
    </citation>
    <scope>NUCLEOTIDE SEQUENCE [LARGE SCALE GENOMIC DNA]</scope>
    <source>
        <strain>ATCC 8527 / DSM 555 / NBRC 12016 / NCIMB 10680 / K1</strain>
    </source>
</reference>
<sequence>MERELVIVVDFGGQYNQLIARRVRENNVYCEIVPYTYSVDKIKEKNPRGIIFTGGPNSVYDDNAPKISEDIFEIGVPVLGICYGHQLICTTLGGKVESAQVREYGKTDVVLNNSSGLFSGIDKNESCWMSHTDFVSYPPEGFKIIGKSGESPVAAVENIDKKIYGVQFHPEVEHTPFGKKMLSNFLFDICNLKGDWSMSSFVDEKIKSIKEEVGDKKVICAMSGGVDSSVAAMIVHKAVGKQLTCIFVDHGLLRKDEGDQVEDIFKKQFNMNFIRVNAEKRFLQKLKDISDPEKKRKIIGEEFIRVFEEEAKKLGEIAFLVQGTIYPDVVESGLGTSATIKSHHNVGGLPEDMDFKLIEPLRELFKDEVRAVGEELGIPHKLVWRQPFPGPGLAIRVLGNITEEKLQITRDADAIFREEIAKANLDETIWQYFACLPNIRSVGVMGDERTYCYTIALRAVISTDAMTSDWARIPYEVLDKVSRRIVNEVKGVNRIVYDITSKPPATIEWE</sequence>
<organism>
    <name type="scientific">Clostridium kluyveri (strain ATCC 8527 / DSM 555 / NBRC 12016 / NCIMB 10680 / K1)</name>
    <dbReference type="NCBI Taxonomy" id="431943"/>
    <lineage>
        <taxon>Bacteria</taxon>
        <taxon>Bacillati</taxon>
        <taxon>Bacillota</taxon>
        <taxon>Clostridia</taxon>
        <taxon>Eubacteriales</taxon>
        <taxon>Clostridiaceae</taxon>
        <taxon>Clostridium</taxon>
    </lineage>
</organism>
<proteinExistence type="inferred from homology"/>
<name>GUAA_CLOK5</name>
<keyword id="KW-0067">ATP-binding</keyword>
<keyword id="KW-0315">Glutamine amidotransferase</keyword>
<keyword id="KW-0332">GMP biosynthesis</keyword>
<keyword id="KW-0436">Ligase</keyword>
<keyword id="KW-0547">Nucleotide-binding</keyword>
<keyword id="KW-0658">Purine biosynthesis</keyword>
<keyword id="KW-1185">Reference proteome</keyword>
<protein>
    <recommendedName>
        <fullName evidence="1">GMP synthase [glutamine-hydrolyzing]</fullName>
        <ecNumber evidence="1">6.3.5.2</ecNumber>
    </recommendedName>
    <alternativeName>
        <fullName evidence="1">GMP synthetase</fullName>
    </alternativeName>
    <alternativeName>
        <fullName evidence="1">Glutamine amidotransferase</fullName>
    </alternativeName>
</protein>
<gene>
    <name evidence="1" type="primary">guaA</name>
    <name type="ordered locus">CKL_0466</name>
</gene>